<keyword id="KW-0963">Cytoplasm</keyword>
<keyword id="KW-0342">GTP-binding</keyword>
<keyword id="KW-0436">Ligase</keyword>
<keyword id="KW-0460">Magnesium</keyword>
<keyword id="KW-0479">Metal-binding</keyword>
<keyword id="KW-0547">Nucleotide-binding</keyword>
<keyword id="KW-0658">Purine biosynthesis</keyword>
<sequence>MAKNVVVLGTQWGDEGKGKVVDLLTDKATYVVRYQGGHNAGHTLVIDGEKTVLHLIPSGILRENVTCVIGNGVVLSPEALLKESAMLEERGVPVKERLRISEACPLILPFHVELDLAREKARGDKPIGTTGRGIGPAYEDKVSRRGLRVGDLFNPTDFAVKLKEVLEYHNFMLTNYYKVEPVSYEKTLADALAVADILKAMVVDVTDVLDRARKRGDEIMFEGAQGTLLDIDHGTYPYVTSSNTTVGGVATGAGFGPLHLDYVLGIVKAYTTRVGSGPFPTELGCDVGQHLGIKGHEFGATTGRKRRTGWFDAVAMKRAVQINSITGFCLTKLDVLDGLETLSICTGYKHADGTVKDVPPMAADDYELITPVYEEMPGWSENSFGVTEYDNLPQAAKNYIKRLEELTGVPIDIISTGPDRNETIVLRHPFEV</sequence>
<organism>
    <name type="scientific">Pseudoalteromonas atlantica (strain T6c / ATCC BAA-1087)</name>
    <dbReference type="NCBI Taxonomy" id="3042615"/>
    <lineage>
        <taxon>Bacteria</taxon>
        <taxon>Pseudomonadati</taxon>
        <taxon>Pseudomonadota</taxon>
        <taxon>Gammaproteobacteria</taxon>
        <taxon>Alteromonadales</taxon>
        <taxon>Alteromonadaceae</taxon>
        <taxon>Paraglaciecola</taxon>
    </lineage>
</organism>
<name>PURA_PSEA6</name>
<gene>
    <name evidence="1" type="primary">purA</name>
    <name type="ordered locus">Patl_0215</name>
</gene>
<proteinExistence type="inferred from homology"/>
<feature type="chain" id="PRO_1000000893" description="Adenylosuccinate synthetase">
    <location>
        <begin position="1"/>
        <end position="432"/>
    </location>
</feature>
<feature type="active site" description="Proton acceptor" evidence="1">
    <location>
        <position position="14"/>
    </location>
</feature>
<feature type="active site" description="Proton donor" evidence="1">
    <location>
        <position position="42"/>
    </location>
</feature>
<feature type="binding site" evidence="1">
    <location>
        <begin position="13"/>
        <end position="19"/>
    </location>
    <ligand>
        <name>GTP</name>
        <dbReference type="ChEBI" id="CHEBI:37565"/>
    </ligand>
</feature>
<feature type="binding site" description="in other chain" evidence="1">
    <location>
        <begin position="14"/>
        <end position="17"/>
    </location>
    <ligand>
        <name>IMP</name>
        <dbReference type="ChEBI" id="CHEBI:58053"/>
        <note>ligand shared between dimeric partners</note>
    </ligand>
</feature>
<feature type="binding site" evidence="1">
    <location>
        <position position="14"/>
    </location>
    <ligand>
        <name>Mg(2+)</name>
        <dbReference type="ChEBI" id="CHEBI:18420"/>
    </ligand>
</feature>
<feature type="binding site" description="in other chain" evidence="1">
    <location>
        <begin position="39"/>
        <end position="42"/>
    </location>
    <ligand>
        <name>IMP</name>
        <dbReference type="ChEBI" id="CHEBI:58053"/>
        <note>ligand shared between dimeric partners</note>
    </ligand>
</feature>
<feature type="binding site" evidence="1">
    <location>
        <begin position="41"/>
        <end position="43"/>
    </location>
    <ligand>
        <name>GTP</name>
        <dbReference type="ChEBI" id="CHEBI:37565"/>
    </ligand>
</feature>
<feature type="binding site" evidence="1">
    <location>
        <position position="41"/>
    </location>
    <ligand>
        <name>Mg(2+)</name>
        <dbReference type="ChEBI" id="CHEBI:18420"/>
    </ligand>
</feature>
<feature type="binding site" description="in other chain" evidence="1">
    <location>
        <position position="130"/>
    </location>
    <ligand>
        <name>IMP</name>
        <dbReference type="ChEBI" id="CHEBI:58053"/>
        <note>ligand shared between dimeric partners</note>
    </ligand>
</feature>
<feature type="binding site" evidence="1">
    <location>
        <position position="144"/>
    </location>
    <ligand>
        <name>IMP</name>
        <dbReference type="ChEBI" id="CHEBI:58053"/>
        <note>ligand shared between dimeric partners</note>
    </ligand>
</feature>
<feature type="binding site" description="in other chain" evidence="1">
    <location>
        <position position="225"/>
    </location>
    <ligand>
        <name>IMP</name>
        <dbReference type="ChEBI" id="CHEBI:58053"/>
        <note>ligand shared between dimeric partners</note>
    </ligand>
</feature>
<feature type="binding site" description="in other chain" evidence="1">
    <location>
        <position position="240"/>
    </location>
    <ligand>
        <name>IMP</name>
        <dbReference type="ChEBI" id="CHEBI:58053"/>
        <note>ligand shared between dimeric partners</note>
    </ligand>
</feature>
<feature type="binding site" evidence="1">
    <location>
        <begin position="300"/>
        <end position="306"/>
    </location>
    <ligand>
        <name>substrate</name>
    </ligand>
</feature>
<feature type="binding site" description="in other chain" evidence="1">
    <location>
        <position position="304"/>
    </location>
    <ligand>
        <name>IMP</name>
        <dbReference type="ChEBI" id="CHEBI:58053"/>
        <note>ligand shared between dimeric partners</note>
    </ligand>
</feature>
<feature type="binding site" evidence="1">
    <location>
        <position position="306"/>
    </location>
    <ligand>
        <name>GTP</name>
        <dbReference type="ChEBI" id="CHEBI:37565"/>
    </ligand>
</feature>
<feature type="binding site" evidence="1">
    <location>
        <begin position="332"/>
        <end position="334"/>
    </location>
    <ligand>
        <name>GTP</name>
        <dbReference type="ChEBI" id="CHEBI:37565"/>
    </ligand>
</feature>
<feature type="binding site" evidence="1">
    <location>
        <begin position="415"/>
        <end position="417"/>
    </location>
    <ligand>
        <name>GTP</name>
        <dbReference type="ChEBI" id="CHEBI:37565"/>
    </ligand>
</feature>
<comment type="function">
    <text evidence="1">Plays an important role in the de novo pathway of purine nucleotide biosynthesis. Catalyzes the first committed step in the biosynthesis of AMP from IMP.</text>
</comment>
<comment type="catalytic activity">
    <reaction evidence="1">
        <text>IMP + L-aspartate + GTP = N(6)-(1,2-dicarboxyethyl)-AMP + GDP + phosphate + 2 H(+)</text>
        <dbReference type="Rhea" id="RHEA:15753"/>
        <dbReference type="ChEBI" id="CHEBI:15378"/>
        <dbReference type="ChEBI" id="CHEBI:29991"/>
        <dbReference type="ChEBI" id="CHEBI:37565"/>
        <dbReference type="ChEBI" id="CHEBI:43474"/>
        <dbReference type="ChEBI" id="CHEBI:57567"/>
        <dbReference type="ChEBI" id="CHEBI:58053"/>
        <dbReference type="ChEBI" id="CHEBI:58189"/>
        <dbReference type="EC" id="6.3.4.4"/>
    </reaction>
</comment>
<comment type="cofactor">
    <cofactor evidence="1">
        <name>Mg(2+)</name>
        <dbReference type="ChEBI" id="CHEBI:18420"/>
    </cofactor>
    <text evidence="1">Binds 1 Mg(2+) ion per subunit.</text>
</comment>
<comment type="pathway">
    <text evidence="1">Purine metabolism; AMP biosynthesis via de novo pathway; AMP from IMP: step 1/2.</text>
</comment>
<comment type="subunit">
    <text evidence="1">Homodimer.</text>
</comment>
<comment type="subcellular location">
    <subcellularLocation>
        <location evidence="1">Cytoplasm</location>
    </subcellularLocation>
</comment>
<comment type="similarity">
    <text evidence="1">Belongs to the adenylosuccinate synthetase family.</text>
</comment>
<evidence type="ECO:0000255" key="1">
    <source>
        <dbReference type="HAMAP-Rule" id="MF_00011"/>
    </source>
</evidence>
<dbReference type="EC" id="6.3.4.4" evidence="1"/>
<dbReference type="EMBL" id="CP000388">
    <property type="protein sequence ID" value="ABG38747.1"/>
    <property type="molecule type" value="Genomic_DNA"/>
</dbReference>
<dbReference type="RefSeq" id="WP_011573151.1">
    <property type="nucleotide sequence ID" value="NC_008228.1"/>
</dbReference>
<dbReference type="SMR" id="Q15ZE1"/>
<dbReference type="STRING" id="342610.Patl_0215"/>
<dbReference type="KEGG" id="pat:Patl_0215"/>
<dbReference type="eggNOG" id="COG0104">
    <property type="taxonomic scope" value="Bacteria"/>
</dbReference>
<dbReference type="HOGENOM" id="CLU_029848_0_0_6"/>
<dbReference type="OrthoDB" id="9807553at2"/>
<dbReference type="UniPathway" id="UPA00075">
    <property type="reaction ID" value="UER00335"/>
</dbReference>
<dbReference type="Proteomes" id="UP000001981">
    <property type="component" value="Chromosome"/>
</dbReference>
<dbReference type="GO" id="GO:0005737">
    <property type="term" value="C:cytoplasm"/>
    <property type="evidence" value="ECO:0007669"/>
    <property type="project" value="UniProtKB-SubCell"/>
</dbReference>
<dbReference type="GO" id="GO:0004019">
    <property type="term" value="F:adenylosuccinate synthase activity"/>
    <property type="evidence" value="ECO:0007669"/>
    <property type="project" value="UniProtKB-UniRule"/>
</dbReference>
<dbReference type="GO" id="GO:0005525">
    <property type="term" value="F:GTP binding"/>
    <property type="evidence" value="ECO:0007669"/>
    <property type="project" value="UniProtKB-UniRule"/>
</dbReference>
<dbReference type="GO" id="GO:0000287">
    <property type="term" value="F:magnesium ion binding"/>
    <property type="evidence" value="ECO:0007669"/>
    <property type="project" value="UniProtKB-UniRule"/>
</dbReference>
<dbReference type="GO" id="GO:0044208">
    <property type="term" value="P:'de novo' AMP biosynthetic process"/>
    <property type="evidence" value="ECO:0007669"/>
    <property type="project" value="UniProtKB-UniRule"/>
</dbReference>
<dbReference type="GO" id="GO:0046040">
    <property type="term" value="P:IMP metabolic process"/>
    <property type="evidence" value="ECO:0007669"/>
    <property type="project" value="TreeGrafter"/>
</dbReference>
<dbReference type="CDD" id="cd03108">
    <property type="entry name" value="AdSS"/>
    <property type="match status" value="1"/>
</dbReference>
<dbReference type="FunFam" id="1.10.300.10:FF:000001">
    <property type="entry name" value="Adenylosuccinate synthetase"/>
    <property type="match status" value="1"/>
</dbReference>
<dbReference type="FunFam" id="3.90.170.10:FF:000001">
    <property type="entry name" value="Adenylosuccinate synthetase"/>
    <property type="match status" value="1"/>
</dbReference>
<dbReference type="Gene3D" id="3.40.440.10">
    <property type="entry name" value="Adenylosuccinate Synthetase, subunit A, domain 1"/>
    <property type="match status" value="1"/>
</dbReference>
<dbReference type="Gene3D" id="1.10.300.10">
    <property type="entry name" value="Adenylosuccinate Synthetase, subunit A, domain 2"/>
    <property type="match status" value="1"/>
</dbReference>
<dbReference type="Gene3D" id="3.90.170.10">
    <property type="entry name" value="Adenylosuccinate Synthetase, subunit A, domain 3"/>
    <property type="match status" value="1"/>
</dbReference>
<dbReference type="HAMAP" id="MF_00011">
    <property type="entry name" value="Adenylosucc_synth"/>
    <property type="match status" value="1"/>
</dbReference>
<dbReference type="InterPro" id="IPR018220">
    <property type="entry name" value="Adenylosuccin_syn_GTP-bd"/>
</dbReference>
<dbReference type="InterPro" id="IPR033128">
    <property type="entry name" value="Adenylosuccin_syn_Lys_AS"/>
</dbReference>
<dbReference type="InterPro" id="IPR042109">
    <property type="entry name" value="Adenylosuccinate_synth_dom1"/>
</dbReference>
<dbReference type="InterPro" id="IPR042110">
    <property type="entry name" value="Adenylosuccinate_synth_dom2"/>
</dbReference>
<dbReference type="InterPro" id="IPR042111">
    <property type="entry name" value="Adenylosuccinate_synth_dom3"/>
</dbReference>
<dbReference type="InterPro" id="IPR001114">
    <property type="entry name" value="Adenylosuccinate_synthetase"/>
</dbReference>
<dbReference type="InterPro" id="IPR027417">
    <property type="entry name" value="P-loop_NTPase"/>
</dbReference>
<dbReference type="NCBIfam" id="NF002223">
    <property type="entry name" value="PRK01117.1"/>
    <property type="match status" value="1"/>
</dbReference>
<dbReference type="NCBIfam" id="TIGR00184">
    <property type="entry name" value="purA"/>
    <property type="match status" value="1"/>
</dbReference>
<dbReference type="PANTHER" id="PTHR11846">
    <property type="entry name" value="ADENYLOSUCCINATE SYNTHETASE"/>
    <property type="match status" value="1"/>
</dbReference>
<dbReference type="PANTHER" id="PTHR11846:SF0">
    <property type="entry name" value="ADENYLOSUCCINATE SYNTHETASE"/>
    <property type="match status" value="1"/>
</dbReference>
<dbReference type="Pfam" id="PF00709">
    <property type="entry name" value="Adenylsucc_synt"/>
    <property type="match status" value="1"/>
</dbReference>
<dbReference type="SMART" id="SM00788">
    <property type="entry name" value="Adenylsucc_synt"/>
    <property type="match status" value="1"/>
</dbReference>
<dbReference type="SUPFAM" id="SSF52540">
    <property type="entry name" value="P-loop containing nucleoside triphosphate hydrolases"/>
    <property type="match status" value="1"/>
</dbReference>
<dbReference type="PROSITE" id="PS01266">
    <property type="entry name" value="ADENYLOSUCCIN_SYN_1"/>
    <property type="match status" value="1"/>
</dbReference>
<dbReference type="PROSITE" id="PS00513">
    <property type="entry name" value="ADENYLOSUCCIN_SYN_2"/>
    <property type="match status" value="1"/>
</dbReference>
<reference key="1">
    <citation type="submission" date="2006-06" db="EMBL/GenBank/DDBJ databases">
        <title>Complete sequence of Pseudoalteromonas atlantica T6c.</title>
        <authorList>
            <consortium name="US DOE Joint Genome Institute"/>
            <person name="Copeland A."/>
            <person name="Lucas S."/>
            <person name="Lapidus A."/>
            <person name="Barry K."/>
            <person name="Detter J.C."/>
            <person name="Glavina del Rio T."/>
            <person name="Hammon N."/>
            <person name="Israni S."/>
            <person name="Dalin E."/>
            <person name="Tice H."/>
            <person name="Pitluck S."/>
            <person name="Saunders E."/>
            <person name="Brettin T."/>
            <person name="Bruce D."/>
            <person name="Han C."/>
            <person name="Tapia R."/>
            <person name="Gilna P."/>
            <person name="Schmutz J."/>
            <person name="Larimer F."/>
            <person name="Land M."/>
            <person name="Hauser L."/>
            <person name="Kyrpides N."/>
            <person name="Kim E."/>
            <person name="Karls A.C."/>
            <person name="Bartlett D."/>
            <person name="Higgins B.P."/>
            <person name="Richardson P."/>
        </authorList>
    </citation>
    <scope>NUCLEOTIDE SEQUENCE [LARGE SCALE GENOMIC DNA]</scope>
    <source>
        <strain>T6c / ATCC BAA-1087</strain>
    </source>
</reference>
<accession>Q15ZE1</accession>
<protein>
    <recommendedName>
        <fullName evidence="1">Adenylosuccinate synthetase</fullName>
        <shortName evidence="1">AMPSase</shortName>
        <shortName evidence="1">AdSS</shortName>
        <ecNumber evidence="1">6.3.4.4</ecNumber>
    </recommendedName>
    <alternativeName>
        <fullName evidence="1">IMP--aspartate ligase</fullName>
    </alternativeName>
</protein>